<feature type="chain" id="PRO_0000372031" description="GTP cyclohydrolase FolE2">
    <location>
        <begin position="1"/>
        <end position="298"/>
    </location>
</feature>
<feature type="site" description="May be catalytically important" evidence="1">
    <location>
        <position position="188"/>
    </location>
</feature>
<protein>
    <recommendedName>
        <fullName evidence="1">GTP cyclohydrolase FolE2</fullName>
        <ecNumber evidence="1">3.5.4.16</ecNumber>
    </recommendedName>
</protein>
<organism>
    <name type="scientific">Neisseria meningitidis serogroup C (strain 053442)</name>
    <dbReference type="NCBI Taxonomy" id="374833"/>
    <lineage>
        <taxon>Bacteria</taxon>
        <taxon>Pseudomonadati</taxon>
        <taxon>Pseudomonadota</taxon>
        <taxon>Betaproteobacteria</taxon>
        <taxon>Neisseriales</taxon>
        <taxon>Neisseriaceae</taxon>
        <taxon>Neisseria</taxon>
    </lineage>
</organism>
<keyword id="KW-0378">Hydrolase</keyword>
<evidence type="ECO:0000255" key="1">
    <source>
        <dbReference type="HAMAP-Rule" id="MF_01527"/>
    </source>
</evidence>
<comment type="function">
    <text evidence="1">Converts GTP to 7,8-dihydroneopterin triphosphate.</text>
</comment>
<comment type="catalytic activity">
    <reaction evidence="1">
        <text>GTP + H2O = 7,8-dihydroneopterin 3'-triphosphate + formate + H(+)</text>
        <dbReference type="Rhea" id="RHEA:17473"/>
        <dbReference type="ChEBI" id="CHEBI:15377"/>
        <dbReference type="ChEBI" id="CHEBI:15378"/>
        <dbReference type="ChEBI" id="CHEBI:15740"/>
        <dbReference type="ChEBI" id="CHEBI:37565"/>
        <dbReference type="ChEBI" id="CHEBI:58462"/>
        <dbReference type="EC" id="3.5.4.16"/>
    </reaction>
</comment>
<comment type="pathway">
    <text evidence="1">Cofactor biosynthesis; 7,8-dihydroneopterin triphosphate biosynthesis; 7,8-dihydroneopterin triphosphate from GTP: step 1/1.</text>
</comment>
<comment type="similarity">
    <text evidence="1">Belongs to the GTP cyclohydrolase IV family.</text>
</comment>
<sequence>MQLLKASDIISHLQIDGIFPGGNAIPCTHLNNYMNIKEKQLMNTIADVQSSRDLRNLPINQVGIKDLRFPITLQTAEGIQSTIARLTMTVYLPAEQKGTHMSRFVALMEQYSEALDFAQLHRLTAEMVALLDSRAGKISVSFPFFRKKTAPVSGIQSLLDYDVCLTGEMKDGAYGHSMKVMIPVTSLCPCSKEISQYGAHNQRSHVTVSLTADAEVGIEEVIDYVEAQASCQLYGLLKRPDEKYVTEKAYENPKFVEDMVRDVATSLIADKRIKSFVVESENFESIHNHSAYAYIAYP</sequence>
<dbReference type="EC" id="3.5.4.16" evidence="1"/>
<dbReference type="EMBL" id="CP000381">
    <property type="protein sequence ID" value="ABX72959.1"/>
    <property type="molecule type" value="Genomic_DNA"/>
</dbReference>
<dbReference type="SMR" id="A9M3N5"/>
<dbReference type="KEGG" id="nmn:NMCC_0766"/>
<dbReference type="HOGENOM" id="CLU_062816_1_1_4"/>
<dbReference type="UniPathway" id="UPA00848">
    <property type="reaction ID" value="UER00151"/>
</dbReference>
<dbReference type="Proteomes" id="UP000001177">
    <property type="component" value="Chromosome"/>
</dbReference>
<dbReference type="GO" id="GO:0003934">
    <property type="term" value="F:GTP cyclohydrolase I activity"/>
    <property type="evidence" value="ECO:0007669"/>
    <property type="project" value="UniProtKB-UniRule"/>
</dbReference>
<dbReference type="GO" id="GO:0046654">
    <property type="term" value="P:tetrahydrofolate biosynthetic process"/>
    <property type="evidence" value="ECO:0007669"/>
    <property type="project" value="UniProtKB-UniRule"/>
</dbReference>
<dbReference type="Gene3D" id="3.10.270.10">
    <property type="entry name" value="Urate Oxidase"/>
    <property type="match status" value="1"/>
</dbReference>
<dbReference type="HAMAP" id="MF_01527_B">
    <property type="entry name" value="GTP_cyclohydrol_B"/>
    <property type="match status" value="1"/>
</dbReference>
<dbReference type="InterPro" id="IPR022838">
    <property type="entry name" value="GTP_cyclohydrolase_FolE2"/>
</dbReference>
<dbReference type="InterPro" id="IPR003801">
    <property type="entry name" value="GTP_cyclohydrolase_FolE2/MptA"/>
</dbReference>
<dbReference type="NCBIfam" id="NF010200">
    <property type="entry name" value="PRK13674.1-1"/>
    <property type="match status" value="1"/>
</dbReference>
<dbReference type="PANTHER" id="PTHR36445">
    <property type="entry name" value="GTP CYCLOHYDROLASE MPTA"/>
    <property type="match status" value="1"/>
</dbReference>
<dbReference type="PANTHER" id="PTHR36445:SF1">
    <property type="entry name" value="GTP CYCLOHYDROLASE MPTA"/>
    <property type="match status" value="1"/>
</dbReference>
<dbReference type="Pfam" id="PF02649">
    <property type="entry name" value="GCHY-1"/>
    <property type="match status" value="1"/>
</dbReference>
<proteinExistence type="inferred from homology"/>
<gene>
    <name evidence="1" type="primary">folE2</name>
    <name type="ordered locus">NMCC_0766</name>
</gene>
<name>GCH4_NEIM0</name>
<reference key="1">
    <citation type="journal article" date="2008" name="Genomics">
        <title>Characterization of ST-4821 complex, a unique Neisseria meningitidis clone.</title>
        <authorList>
            <person name="Peng J."/>
            <person name="Yang L."/>
            <person name="Yang F."/>
            <person name="Yang J."/>
            <person name="Yan Y."/>
            <person name="Nie H."/>
            <person name="Zhang X."/>
            <person name="Xiong Z."/>
            <person name="Jiang Y."/>
            <person name="Cheng F."/>
            <person name="Xu X."/>
            <person name="Chen S."/>
            <person name="Sun L."/>
            <person name="Li W."/>
            <person name="Shen Y."/>
            <person name="Shao Z."/>
            <person name="Liang X."/>
            <person name="Xu J."/>
            <person name="Jin Q."/>
        </authorList>
    </citation>
    <scope>NUCLEOTIDE SEQUENCE [LARGE SCALE GENOMIC DNA]</scope>
    <source>
        <strain>053442</strain>
    </source>
</reference>
<accession>A9M3N5</accession>